<evidence type="ECO:0000250" key="1"/>
<evidence type="ECO:0000269" key="2">
    <source>
    </source>
</evidence>
<evidence type="ECO:0000305" key="3"/>
<proteinExistence type="evidence at protein level"/>
<accession>O25046</accession>
<sequence length="409" mass="45541">MQEIIGASLVFLCNEKCEVLEDYGVVFDEKIVEIGDYQSLTLKYPHLKAQFFENSVLLPAFINAHTHFEFSNNKASFDYGSFSGWLGSVLNNGGAILENCQGAIQNAISTQLKSGVGSVGAISNHLIEVNLLKESPLNAVVFLEFLGSSYSLEKLKAFEAKFKELKDLEDKKLKAALAVHAPYSVQKDMALSVIQLAKDSQSLLSTHFLESLEELEWVENSKGWFENFYQHFLKESHFKSLYKGANDYIDMFKDTHTLFVHNQFASLEALKRIKSQVKNAFLITCPFSNRLLSGQALDLERTKEAGLSVSVATDGLSSNISLSLLDELRAFLLTHNMPLLELAKIALLGATRHGAKALALNNGEIEANKRADLSVFGFNEKFTKEQAILQFLLHAKEVECLFLGGKRVI</sequence>
<keyword id="KW-0378">Hydrolase</keyword>
<keyword id="KW-0479">Metal-binding</keyword>
<keyword id="KW-1185">Reference proteome</keyword>
<keyword id="KW-0862">Zinc</keyword>
<dbReference type="EC" id="3.5.4.4"/>
<dbReference type="EMBL" id="AE000511">
    <property type="protein sequence ID" value="AAD07333.1"/>
    <property type="molecule type" value="Genomic_DNA"/>
</dbReference>
<dbReference type="EMBL" id="CP003904">
    <property type="protein sequence ID" value="AFV41491.1"/>
    <property type="molecule type" value="Genomic_DNA"/>
</dbReference>
<dbReference type="PIR" id="C64553">
    <property type="entry name" value="C64553"/>
</dbReference>
<dbReference type="RefSeq" id="NP_207065.1">
    <property type="nucleotide sequence ID" value="NC_000915.1"/>
</dbReference>
<dbReference type="SMR" id="O25046"/>
<dbReference type="DIP" id="DIP-3371N"/>
<dbReference type="IntAct" id="O25046">
    <property type="interactions" value="1"/>
</dbReference>
<dbReference type="MINT" id="O25046"/>
<dbReference type="STRING" id="85962.HP_0267"/>
<dbReference type="PaxDb" id="85962-C694_01350"/>
<dbReference type="EnsemblBacteria" id="AAD07333">
    <property type="protein sequence ID" value="AAD07333"/>
    <property type="gene ID" value="HP_0267"/>
</dbReference>
<dbReference type="KEGG" id="heo:C694_01350"/>
<dbReference type="KEGG" id="hpy:HP_0267"/>
<dbReference type="PATRIC" id="fig|85962.47.peg.287"/>
<dbReference type="eggNOG" id="COG0402">
    <property type="taxonomic scope" value="Bacteria"/>
</dbReference>
<dbReference type="HOGENOM" id="CLU_012358_10_1_7"/>
<dbReference type="InParanoid" id="O25046"/>
<dbReference type="OrthoDB" id="9807210at2"/>
<dbReference type="PhylomeDB" id="O25046"/>
<dbReference type="SABIO-RK" id="O25046"/>
<dbReference type="Proteomes" id="UP000000429">
    <property type="component" value="Chromosome"/>
</dbReference>
<dbReference type="GO" id="GO:0004000">
    <property type="term" value="F:adenosine deaminase activity"/>
    <property type="evidence" value="ECO:0007669"/>
    <property type="project" value="RHEA"/>
</dbReference>
<dbReference type="GO" id="GO:0046872">
    <property type="term" value="F:metal ion binding"/>
    <property type="evidence" value="ECO:0007669"/>
    <property type="project" value="UniProtKB-KW"/>
</dbReference>
<dbReference type="CDD" id="cd01312">
    <property type="entry name" value="Met_dep_hydrolase_D"/>
    <property type="match status" value="1"/>
</dbReference>
<dbReference type="Gene3D" id="3.20.20.140">
    <property type="entry name" value="Metal-dependent hydrolases"/>
    <property type="match status" value="1"/>
</dbReference>
<dbReference type="Gene3D" id="2.30.40.10">
    <property type="entry name" value="Urease, subunit C, domain 1"/>
    <property type="match status" value="1"/>
</dbReference>
<dbReference type="InterPro" id="IPR006680">
    <property type="entry name" value="Amidohydro-rel"/>
</dbReference>
<dbReference type="InterPro" id="IPR011059">
    <property type="entry name" value="Metal-dep_hydrolase_composite"/>
</dbReference>
<dbReference type="InterPro" id="IPR032466">
    <property type="entry name" value="Metal_Hydrolase"/>
</dbReference>
<dbReference type="InterPro" id="IPR050287">
    <property type="entry name" value="MTA/SAH_deaminase"/>
</dbReference>
<dbReference type="NCBIfam" id="NF006269">
    <property type="entry name" value="PRK08418.1"/>
    <property type="match status" value="1"/>
</dbReference>
<dbReference type="PANTHER" id="PTHR43794:SF11">
    <property type="entry name" value="AMIDOHYDROLASE-RELATED DOMAIN-CONTAINING PROTEIN"/>
    <property type="match status" value="1"/>
</dbReference>
<dbReference type="PANTHER" id="PTHR43794">
    <property type="entry name" value="AMINOHYDROLASE SSNA-RELATED"/>
    <property type="match status" value="1"/>
</dbReference>
<dbReference type="Pfam" id="PF01979">
    <property type="entry name" value="Amidohydro_1"/>
    <property type="match status" value="1"/>
</dbReference>
<dbReference type="SUPFAM" id="SSF51338">
    <property type="entry name" value="Composite domain of metallo-dependent hydrolases"/>
    <property type="match status" value="1"/>
</dbReference>
<dbReference type="SUPFAM" id="SSF51556">
    <property type="entry name" value="Metallo-dependent hydrolases"/>
    <property type="match status" value="1"/>
</dbReference>
<protein>
    <recommendedName>
        <fullName>Adenosine deaminase</fullName>
        <ecNumber>3.5.4.4</ecNumber>
    </recommendedName>
</protein>
<name>ADDE_HELPY</name>
<feature type="chain" id="PRO_0000424561" description="Adenosine deaminase">
    <location>
        <begin position="1"/>
        <end position="409"/>
    </location>
</feature>
<feature type="binding site" evidence="1">
    <location>
        <position position="65"/>
    </location>
    <ligand>
        <name>Zn(2+)</name>
        <dbReference type="ChEBI" id="CHEBI:29105"/>
    </ligand>
</feature>
<feature type="binding site" evidence="1">
    <location>
        <position position="67"/>
    </location>
    <ligand>
        <name>Zn(2+)</name>
        <dbReference type="ChEBI" id="CHEBI:29105"/>
    </ligand>
</feature>
<feature type="binding site" evidence="1">
    <location>
        <position position="207"/>
    </location>
    <ligand>
        <name>Zn(2+)</name>
        <dbReference type="ChEBI" id="CHEBI:29105"/>
    </ligand>
</feature>
<feature type="binding site" evidence="1">
    <location>
        <position position="314"/>
    </location>
    <ligand>
        <name>Zn(2+)</name>
        <dbReference type="ChEBI" id="CHEBI:29105"/>
    </ligand>
</feature>
<comment type="function">
    <text evidence="2">Catalyzes the deamination of adenosine into inosine. Is also able to deaminate adenine, but with considerably less efficiency. Is not active toward 6-chloroadenine.</text>
</comment>
<comment type="catalytic activity">
    <reaction evidence="2">
        <text>adenosine + H2O + H(+) = inosine + NH4(+)</text>
        <dbReference type="Rhea" id="RHEA:24408"/>
        <dbReference type="ChEBI" id="CHEBI:15377"/>
        <dbReference type="ChEBI" id="CHEBI:15378"/>
        <dbReference type="ChEBI" id="CHEBI:16335"/>
        <dbReference type="ChEBI" id="CHEBI:17596"/>
        <dbReference type="ChEBI" id="CHEBI:28938"/>
        <dbReference type="EC" id="3.5.4.4"/>
    </reaction>
</comment>
<comment type="cofactor">
    <cofactor evidence="1">
        <name>Zn(2+)</name>
        <dbReference type="ChEBI" id="CHEBI:29105"/>
    </cofactor>
    <text evidence="1">Binds 1 zinc ion per subunit.</text>
</comment>
<comment type="biophysicochemical properties">
    <kinetics>
        <KM evidence="2">0.32 mM for adenosine</KM>
        <KM evidence="2">2.04 mM for adenine</KM>
        <text>kcat is 1101 min(-1) and 0.47 min(-1) with adenosine and adenine as substrate, respectively.</text>
    </kinetics>
    <phDependence>
        <text evidence="2">Optimum pH is about 7.5. Retains &gt; 70% maximum activity at pH 9.0, but displays only 6% activity at pH 4.5.</text>
    </phDependence>
    <temperatureDependence>
        <text evidence="2">Optimum temperature is about 45 degrees Celsius.</text>
    </temperatureDependence>
</comment>
<comment type="similarity">
    <text evidence="3">Belongs to the metallo-dependent hydrolases superfamily.</text>
</comment>
<organism>
    <name type="scientific">Helicobacter pylori (strain ATCC 700392 / 26695)</name>
    <name type="common">Campylobacter pylori</name>
    <dbReference type="NCBI Taxonomy" id="85962"/>
    <lineage>
        <taxon>Bacteria</taxon>
        <taxon>Pseudomonadati</taxon>
        <taxon>Campylobacterota</taxon>
        <taxon>Epsilonproteobacteria</taxon>
        <taxon>Campylobacterales</taxon>
        <taxon>Helicobacteraceae</taxon>
        <taxon>Helicobacter</taxon>
    </lineage>
</organism>
<reference key="1">
    <citation type="journal article" date="1997" name="Nature">
        <title>The complete genome sequence of the gastric pathogen Helicobacter pylori.</title>
        <authorList>
            <person name="Tomb J.-F."/>
            <person name="White O."/>
            <person name="Kerlavage A.R."/>
            <person name="Clayton R.A."/>
            <person name="Sutton G.G."/>
            <person name="Fleischmann R.D."/>
            <person name="Ketchum K.A."/>
            <person name="Klenk H.-P."/>
            <person name="Gill S.R."/>
            <person name="Dougherty B.A."/>
            <person name="Nelson K.E."/>
            <person name="Quackenbush J."/>
            <person name="Zhou L."/>
            <person name="Kirkness E.F."/>
            <person name="Peterson S.N."/>
            <person name="Loftus B.J."/>
            <person name="Richardson D.L."/>
            <person name="Dodson R.J."/>
            <person name="Khalak H.G."/>
            <person name="Glodek A."/>
            <person name="McKenney K."/>
            <person name="FitzGerald L.M."/>
            <person name="Lee N."/>
            <person name="Adams M.D."/>
            <person name="Hickey E.K."/>
            <person name="Berg D.E."/>
            <person name="Gocayne J.D."/>
            <person name="Utterback T.R."/>
            <person name="Peterson J.D."/>
            <person name="Kelley J.M."/>
            <person name="Cotton M.D."/>
            <person name="Weidman J.F."/>
            <person name="Fujii C."/>
            <person name="Bowman C."/>
            <person name="Watthey L."/>
            <person name="Wallin E."/>
            <person name="Hayes W.S."/>
            <person name="Borodovsky M."/>
            <person name="Karp P.D."/>
            <person name="Smith H.O."/>
            <person name="Fraser C.M."/>
            <person name="Venter J.C."/>
        </authorList>
    </citation>
    <scope>NUCLEOTIDE SEQUENCE [LARGE SCALE GENOMIC DNA]</scope>
    <source>
        <strain>ATCC 700392 / 26695</strain>
    </source>
</reference>
<reference key="2">
    <citation type="submission" date="2012-10" db="EMBL/GenBank/DDBJ databases">
        <title>Draft genome of Helicobacter pylori.</title>
        <authorList>
            <person name="Manolov A."/>
            <person name="Prihodko E."/>
            <person name="Larin A."/>
            <person name="Karpova I."/>
            <person name="Semashko T."/>
            <person name="Alexeev D."/>
            <person name="Kostrjukova E."/>
            <person name="Govorun V."/>
        </authorList>
    </citation>
    <scope>NUCLEOTIDE SEQUENCE [LARGE SCALE GENOMIC DNA]</scope>
    <source>
        <strain>ATCC 700392 / 26695</strain>
    </source>
</reference>
<reference key="3">
    <citation type="journal article" date="2013" name="PLoS ONE">
        <title>Biochemical characterization of hypothetical proteins from Helicobacter pylori.</title>
        <authorList>
            <person name="Choi H.P."/>
            <person name="Juarez S."/>
            <person name="Ciordia S."/>
            <person name="Fernandez M."/>
            <person name="Bargiela R."/>
            <person name="Albar J.P."/>
            <person name="Mazumdar V."/>
            <person name="Anton B.P."/>
            <person name="Kasif S."/>
            <person name="Ferrer M."/>
            <person name="Steffen M."/>
        </authorList>
    </citation>
    <scope>IDENTIFICATION BY MASS SPECTROMETRY</scope>
    <scope>FUNCTION</scope>
    <scope>CATALYTIC ACTIVITY</scope>
    <scope>SUBSTRATE SPECIFICITY</scope>
    <scope>BIOPHYSICOCHEMICAL PROPERTIES</scope>
    <source>
        <strain>ATCC 700392 / 26695</strain>
    </source>
</reference>
<gene>
    <name type="ordered locus">HP_0267</name>
    <name type="ordered locus">C694_01350</name>
</gene>